<comment type="function">
    <text>GTP cyclohydrolase 1 is the first enzyme in the biosynthetic pathway leading to folic acid.</text>
</comment>
<comment type="catalytic activity">
    <reaction>
        <text>GTP + H2O = 7,8-dihydroneopterin 3'-triphosphate + formate + H(+)</text>
        <dbReference type="Rhea" id="RHEA:17473"/>
        <dbReference type="ChEBI" id="CHEBI:15377"/>
        <dbReference type="ChEBI" id="CHEBI:15378"/>
        <dbReference type="ChEBI" id="CHEBI:15740"/>
        <dbReference type="ChEBI" id="CHEBI:37565"/>
        <dbReference type="ChEBI" id="CHEBI:58462"/>
        <dbReference type="EC" id="3.5.4.16"/>
    </reaction>
</comment>
<comment type="activity regulation">
    <text evidence="1">GTP shows a positive allosteric effect, and tetrahydrobiopterin inhibits the enzyme activity.</text>
</comment>
<comment type="pathway">
    <text>Cofactor biosynthesis; 7,8-dihydroneopterin triphosphate biosynthesis; 7,8-dihydroneopterin triphosphate from GTP: step 1/1.</text>
</comment>
<comment type="subunit">
    <text evidence="1">Toroid-shaped homodecamer, composed of two pentamers of five dimers.</text>
</comment>
<comment type="similarity">
    <text evidence="2">Belongs to the GTP cyclohydrolase I family.</text>
</comment>
<organism>
    <name type="scientific">Phycomyces blakesleeanus</name>
    <dbReference type="NCBI Taxonomy" id="4837"/>
    <lineage>
        <taxon>Eukaryota</taxon>
        <taxon>Fungi</taxon>
        <taxon>Fungi incertae sedis</taxon>
        <taxon>Mucoromycota</taxon>
        <taxon>Mucoromycotina</taxon>
        <taxon>Mucoromycetes</taxon>
        <taxon>Mucorales</taxon>
        <taxon>Phycomycetaceae</taxon>
        <taxon>Phycomyces</taxon>
    </lineage>
</organism>
<protein>
    <recommendedName>
        <fullName>GTP cyclohydrolase 1</fullName>
        <ecNumber>3.5.4.16</ecNumber>
    </recommendedName>
    <alternativeName>
        <fullName>GTP cyclohydrolase I</fullName>
        <shortName>GTP-CH-I</shortName>
    </alternativeName>
</protein>
<sequence>EDHDEMVIVKDVDIFSLCEHHKVPSTGKISIGYIPNRRVVGLSKLARIAEMFSRRLQVQERLTKQVATALMEILQPQGVAVVVECSHLCMVMRG</sequence>
<feature type="chain" id="PRO_0000119487" description="GTP cyclohydrolase 1">
    <location>
        <begin position="1" status="less than"/>
        <end position="94" status="greater than"/>
    </location>
</feature>
<feature type="binding site" evidence="1">
    <location>
        <position position="18"/>
    </location>
    <ligand>
        <name>Zn(2+)</name>
        <dbReference type="ChEBI" id="CHEBI:29105"/>
    </ligand>
</feature>
<feature type="binding site" evidence="1">
    <location>
        <position position="21"/>
    </location>
    <ligand>
        <name>Zn(2+)</name>
        <dbReference type="ChEBI" id="CHEBI:29105"/>
    </ligand>
</feature>
<feature type="binding site" evidence="1">
    <location>
        <position position="89"/>
    </location>
    <ligand>
        <name>Zn(2+)</name>
        <dbReference type="ChEBI" id="CHEBI:29105"/>
    </ligand>
</feature>
<feature type="non-terminal residue">
    <location>
        <position position="1"/>
    </location>
</feature>
<feature type="non-terminal residue">
    <location>
        <position position="94"/>
    </location>
</feature>
<dbReference type="EC" id="3.5.4.16"/>
<dbReference type="EMBL" id="Z49760">
    <property type="protein sequence ID" value="CAA89830.1"/>
    <property type="molecule type" value="mRNA"/>
</dbReference>
<dbReference type="PIR" id="S54910">
    <property type="entry name" value="S54910"/>
</dbReference>
<dbReference type="SMR" id="P51600"/>
<dbReference type="VEuPathDB" id="FungiDB:PHYBLDRAFT_112460"/>
<dbReference type="UniPathway" id="UPA00848">
    <property type="reaction ID" value="UER00151"/>
</dbReference>
<dbReference type="GO" id="GO:0005737">
    <property type="term" value="C:cytoplasm"/>
    <property type="evidence" value="ECO:0007669"/>
    <property type="project" value="TreeGrafter"/>
</dbReference>
<dbReference type="GO" id="GO:0005525">
    <property type="term" value="F:GTP binding"/>
    <property type="evidence" value="ECO:0007669"/>
    <property type="project" value="UniProtKB-KW"/>
</dbReference>
<dbReference type="GO" id="GO:0003934">
    <property type="term" value="F:GTP cyclohydrolase I activity"/>
    <property type="evidence" value="ECO:0007669"/>
    <property type="project" value="UniProtKB-EC"/>
</dbReference>
<dbReference type="GO" id="GO:0008270">
    <property type="term" value="F:zinc ion binding"/>
    <property type="evidence" value="ECO:0007669"/>
    <property type="project" value="TreeGrafter"/>
</dbReference>
<dbReference type="GO" id="GO:0046656">
    <property type="term" value="P:folic acid biosynthetic process"/>
    <property type="evidence" value="ECO:0007669"/>
    <property type="project" value="UniProtKB-KW"/>
</dbReference>
<dbReference type="GO" id="GO:0006729">
    <property type="term" value="P:tetrahydrobiopterin biosynthetic process"/>
    <property type="evidence" value="ECO:0007669"/>
    <property type="project" value="TreeGrafter"/>
</dbReference>
<dbReference type="GO" id="GO:0046654">
    <property type="term" value="P:tetrahydrofolate biosynthetic process"/>
    <property type="evidence" value="ECO:0007669"/>
    <property type="project" value="InterPro"/>
</dbReference>
<dbReference type="FunFam" id="3.30.1130.10:FF:000012">
    <property type="entry name" value="GTP cyclohydrolase 1"/>
    <property type="match status" value="1"/>
</dbReference>
<dbReference type="Gene3D" id="3.30.1130.10">
    <property type="match status" value="1"/>
</dbReference>
<dbReference type="InterPro" id="IPR043133">
    <property type="entry name" value="GTP-CH-I_C/QueF"/>
</dbReference>
<dbReference type="InterPro" id="IPR001474">
    <property type="entry name" value="GTP_CycHdrlase_I"/>
</dbReference>
<dbReference type="InterPro" id="IPR018234">
    <property type="entry name" value="GTP_CycHdrlase_I_CS"/>
</dbReference>
<dbReference type="InterPro" id="IPR020602">
    <property type="entry name" value="GTP_CycHdrlase_I_dom"/>
</dbReference>
<dbReference type="PANTHER" id="PTHR11109:SF7">
    <property type="entry name" value="GTP CYCLOHYDROLASE 1"/>
    <property type="match status" value="1"/>
</dbReference>
<dbReference type="PANTHER" id="PTHR11109">
    <property type="entry name" value="GTP CYCLOHYDROLASE I"/>
    <property type="match status" value="1"/>
</dbReference>
<dbReference type="Pfam" id="PF01227">
    <property type="entry name" value="GTP_cyclohydroI"/>
    <property type="match status" value="1"/>
</dbReference>
<dbReference type="SUPFAM" id="SSF55620">
    <property type="entry name" value="Tetrahydrobiopterin biosynthesis enzymes-like"/>
    <property type="match status" value="1"/>
</dbReference>
<dbReference type="PROSITE" id="PS00859">
    <property type="entry name" value="GTP_CYCLOHYDROL_1_1"/>
    <property type="match status" value="1"/>
</dbReference>
<dbReference type="PROSITE" id="PS00860">
    <property type="entry name" value="GTP_CYCLOHYDROL_1_2"/>
    <property type="match status" value="1"/>
</dbReference>
<proteinExistence type="evidence at transcript level"/>
<evidence type="ECO:0000250" key="1"/>
<evidence type="ECO:0000305" key="2"/>
<accession>P51600</accession>
<name>GCH1_PHYBL</name>
<reference key="1">
    <citation type="journal article" date="1995" name="Biochem. Biophys. Res. Commun.">
        <title>Homology cloning of GTP-cyclohydrolase I from various unrelated eukaryotes by reverse-transcription polymerase chain reaction using a general set of degenerate primers.</title>
        <authorList>
            <person name="Maier J."/>
            <person name="Witter K."/>
            <person name="Guetlich M."/>
            <person name="Ziegler I."/>
            <person name="Werner T."/>
            <person name="Ninnemann H."/>
        </authorList>
    </citation>
    <scope>NUCLEOTIDE SEQUENCE [MRNA]</scope>
    <source>
        <strain>DSM 62921 / CBS 283.35 / IMB 7212</strain>
    </source>
</reference>
<keyword id="KW-0021">Allosteric enzyme</keyword>
<keyword id="KW-0289">Folate biosynthesis</keyword>
<keyword id="KW-0342">GTP-binding</keyword>
<keyword id="KW-0378">Hydrolase</keyword>
<keyword id="KW-0479">Metal-binding</keyword>
<keyword id="KW-0547">Nucleotide-binding</keyword>
<keyword id="KW-0862">Zinc</keyword>